<feature type="chain" id="PRO_0000380724" description="Putrescine carbamoyltransferase">
    <location>
        <begin position="1"/>
        <end position="339"/>
    </location>
</feature>
<feature type="binding site" evidence="1">
    <location>
        <begin position="54"/>
        <end position="58"/>
    </location>
    <ligand>
        <name>carbamoyl phosphate</name>
        <dbReference type="ChEBI" id="CHEBI:58228"/>
    </ligand>
</feature>
<feature type="binding site" evidence="1">
    <location>
        <position position="105"/>
    </location>
    <ligand>
        <name>carbamoyl phosphate</name>
        <dbReference type="ChEBI" id="CHEBI:58228"/>
    </ligand>
</feature>
<feature type="binding site" evidence="1">
    <location>
        <position position="132"/>
    </location>
    <ligand>
        <name>carbamoyl phosphate</name>
        <dbReference type="ChEBI" id="CHEBI:58228"/>
    </ligand>
</feature>
<feature type="binding site" evidence="1">
    <location>
        <begin position="270"/>
        <end position="273"/>
    </location>
    <ligand>
        <name>putrescine</name>
        <dbReference type="ChEBI" id="CHEBI:326268"/>
    </ligand>
</feature>
<feature type="site" description="Important for structural integrity" evidence="1">
    <location>
        <position position="29"/>
    </location>
</feature>
<feature type="site" description="Important for structural integrity" evidence="1">
    <location>
        <position position="145"/>
    </location>
</feature>
<proteinExistence type="inferred from homology"/>
<keyword id="KW-0963">Cytoplasm</keyword>
<keyword id="KW-0620">Polyamine biosynthesis</keyword>
<keyword id="KW-0808">Transferase</keyword>
<evidence type="ECO:0000255" key="1">
    <source>
        <dbReference type="HAMAP-Rule" id="MF_02102"/>
    </source>
</evidence>
<evidence type="ECO:0000305" key="2"/>
<protein>
    <recommendedName>
        <fullName evidence="1">Putrescine carbamoyltransferase</fullName>
        <shortName evidence="1">PTC</shortName>
        <shortName evidence="1">PTCase</shortName>
        <ecNumber evidence="1">2.1.3.6</ecNumber>
    </recommendedName>
    <alternativeName>
        <fullName evidence="1">Putrescine transcarbamoylase</fullName>
    </alternativeName>
    <alternativeName>
        <fullName evidence="1">Putrescine transcarbamylase</fullName>
    </alternativeName>
</protein>
<gene>
    <name evidence="1" type="primary">ptcA</name>
    <name type="synonym">aguB</name>
</gene>
<accession>B7S4N1</accession>
<reference key="1">
    <citation type="journal article" date="2009" name="Oral Microbiol. Immunol.">
        <title>Distribution, regulation and role of the agmatine deiminase system in mutans streptococci.</title>
        <authorList>
            <person name="Griswold A.R."/>
            <person name="Nascimento M.M."/>
            <person name="Burne R.A."/>
        </authorList>
    </citation>
    <scope>NUCLEOTIDE SEQUENCE [GENOMIC DNA]</scope>
    <source>
        <strain>FA-1</strain>
    </source>
</reference>
<comment type="function">
    <text evidence="1">Catalyzes the phosphorolysis of N-carbamoylputrescine to form carbamoyl phosphate and putrescine. Is involved in the degradation pathway of the polyamine agmatine.</text>
</comment>
<comment type="catalytic activity">
    <reaction evidence="1">
        <text>carbamoyl phosphate + putrescine = N-carbamoylputrescine + phosphate + H(+)</text>
        <dbReference type="Rhea" id="RHEA:21936"/>
        <dbReference type="ChEBI" id="CHEBI:15378"/>
        <dbReference type="ChEBI" id="CHEBI:43474"/>
        <dbReference type="ChEBI" id="CHEBI:58228"/>
        <dbReference type="ChEBI" id="CHEBI:58318"/>
        <dbReference type="ChEBI" id="CHEBI:326268"/>
        <dbReference type="EC" id="2.1.3.6"/>
    </reaction>
</comment>
<comment type="pathway">
    <text evidence="1">Amine and polyamine biosynthesis; putrescine biosynthesis via agmatine pathway; putrescine from N-carbamoylputrescine (transferase route): step 1/1.</text>
</comment>
<comment type="subunit">
    <text evidence="1">Homotrimer.</text>
</comment>
<comment type="subcellular location">
    <subcellularLocation>
        <location evidence="1">Cytoplasm</location>
    </subcellularLocation>
</comment>
<comment type="similarity">
    <text evidence="1">Belongs to the aspartate/ornithine carbamoyltransferase superfamily. PTCase family.</text>
</comment>
<comment type="sequence caution" evidence="2">
    <conflict type="erroneous initiation">
        <sequence resource="EMBL-CDS" id="ABN81019"/>
    </conflict>
</comment>
<name>PTC_STRRT</name>
<organism>
    <name type="scientific">Streptococcus ratti</name>
    <dbReference type="NCBI Taxonomy" id="1341"/>
    <lineage>
        <taxon>Bacteria</taxon>
        <taxon>Bacillati</taxon>
        <taxon>Bacillota</taxon>
        <taxon>Bacilli</taxon>
        <taxon>Lactobacillales</taxon>
        <taxon>Streptococcaceae</taxon>
        <taxon>Streptococcus</taxon>
    </lineage>
</organism>
<dbReference type="EC" id="2.1.3.6" evidence="1"/>
<dbReference type="EMBL" id="EF104920">
    <property type="protein sequence ID" value="ABN81019.1"/>
    <property type="status" value="ALT_INIT"/>
    <property type="molecule type" value="Genomic_DNA"/>
</dbReference>
<dbReference type="SMR" id="B7S4N1"/>
<dbReference type="UniPathway" id="UPA00534">
    <property type="reaction ID" value="UER00941"/>
</dbReference>
<dbReference type="GO" id="GO:0005737">
    <property type="term" value="C:cytoplasm"/>
    <property type="evidence" value="ECO:0007669"/>
    <property type="project" value="UniProtKB-SubCell"/>
</dbReference>
<dbReference type="GO" id="GO:0016597">
    <property type="term" value="F:amino acid binding"/>
    <property type="evidence" value="ECO:0007669"/>
    <property type="project" value="InterPro"/>
</dbReference>
<dbReference type="GO" id="GO:0004585">
    <property type="term" value="F:ornithine carbamoyltransferase activity"/>
    <property type="evidence" value="ECO:0007669"/>
    <property type="project" value="TreeGrafter"/>
</dbReference>
<dbReference type="GO" id="GO:0050231">
    <property type="term" value="F:putrescine carbamoyltransferase activity"/>
    <property type="evidence" value="ECO:0007669"/>
    <property type="project" value="UniProtKB-UniRule"/>
</dbReference>
<dbReference type="GO" id="GO:0042450">
    <property type="term" value="P:arginine biosynthetic process via ornithine"/>
    <property type="evidence" value="ECO:0007669"/>
    <property type="project" value="TreeGrafter"/>
</dbReference>
<dbReference type="GO" id="GO:0019240">
    <property type="term" value="P:citrulline biosynthetic process"/>
    <property type="evidence" value="ECO:0007669"/>
    <property type="project" value="TreeGrafter"/>
</dbReference>
<dbReference type="GO" id="GO:0033390">
    <property type="term" value="P:putrescine biosynthetic process from arginine via N-carbamoylputrescine"/>
    <property type="evidence" value="ECO:0007669"/>
    <property type="project" value="UniProtKB-UniRule"/>
</dbReference>
<dbReference type="FunFam" id="3.40.50.1370:FF:000008">
    <property type="entry name" value="Ornithine carbamoyltransferase"/>
    <property type="match status" value="1"/>
</dbReference>
<dbReference type="Gene3D" id="3.40.50.1370">
    <property type="entry name" value="Aspartate/ornithine carbamoyltransferase"/>
    <property type="match status" value="2"/>
</dbReference>
<dbReference type="HAMAP" id="MF_02102">
    <property type="entry name" value="PTCase"/>
    <property type="match status" value="1"/>
</dbReference>
<dbReference type="InterPro" id="IPR006132">
    <property type="entry name" value="Asp/Orn_carbamoyltranf_P-bd"/>
</dbReference>
<dbReference type="InterPro" id="IPR006130">
    <property type="entry name" value="Asp/Orn_carbamoylTrfase"/>
</dbReference>
<dbReference type="InterPro" id="IPR036901">
    <property type="entry name" value="Asp/Orn_carbamoylTrfase_sf"/>
</dbReference>
<dbReference type="InterPro" id="IPR006131">
    <property type="entry name" value="Asp_carbamoyltransf_Asp/Orn-bd"/>
</dbReference>
<dbReference type="InterPro" id="IPR002292">
    <property type="entry name" value="Orn/put_carbamltrans"/>
</dbReference>
<dbReference type="InterPro" id="IPR024903">
    <property type="entry name" value="PtcA"/>
</dbReference>
<dbReference type="NCBIfam" id="TIGR00658">
    <property type="entry name" value="orni_carb_tr"/>
    <property type="match status" value="1"/>
</dbReference>
<dbReference type="NCBIfam" id="NF001986">
    <property type="entry name" value="PRK00779.1"/>
    <property type="match status" value="1"/>
</dbReference>
<dbReference type="NCBIfam" id="TIGR04384">
    <property type="entry name" value="putr_carbamoyl"/>
    <property type="match status" value="1"/>
</dbReference>
<dbReference type="PANTHER" id="PTHR45753">
    <property type="entry name" value="ORNITHINE CARBAMOYLTRANSFERASE, MITOCHONDRIAL"/>
    <property type="match status" value="1"/>
</dbReference>
<dbReference type="PANTHER" id="PTHR45753:SF3">
    <property type="entry name" value="ORNITHINE TRANSCARBAMYLASE, MITOCHONDRIAL"/>
    <property type="match status" value="1"/>
</dbReference>
<dbReference type="Pfam" id="PF00185">
    <property type="entry name" value="OTCace"/>
    <property type="match status" value="1"/>
</dbReference>
<dbReference type="Pfam" id="PF02729">
    <property type="entry name" value="OTCace_N"/>
    <property type="match status" value="1"/>
</dbReference>
<dbReference type="PRINTS" id="PR00100">
    <property type="entry name" value="AOTCASE"/>
</dbReference>
<dbReference type="PRINTS" id="PR00102">
    <property type="entry name" value="OTCASE"/>
</dbReference>
<dbReference type="SUPFAM" id="SSF53671">
    <property type="entry name" value="Aspartate/ornithine carbamoyltransferase"/>
    <property type="match status" value="1"/>
</dbReference>
<sequence>MMKKTDYITTEDFSKEELLKLVDLSLKIKACIKNGYYPPLLEHKSLGMIFQQTSTRTRVSFETAMSQLGGHAQYLAPGQIQLGGHETIEDTSTVLSRLDDILMARVERHQSVVDLARCASIPVINGMSDYNHPTQELGDLCTMIEHLPAGKKLEDCKVVFVGDATQVCFSLALITTKMGMEFVHFGPKGFQLNDMHKEELDKICELSGGKYTVTDNEDAIEGANFLYTDVWYGLYEAELSEEERMQIFFPKYQVDSQMMAKAGADCKFMHCLPATRGEEITDEVMDGPHSICFDEAENRLTSIRGLLVYLLRDYREKNPYDLVKQEKAKEELETFLKPE</sequence>